<name>RIMM_ALKEH</name>
<accession>Q0AA98</accession>
<sequence>MEGADDIVPMGEVVGLHGVRGWVKVYSHTEPREAILDYPHWYLRRDDGDWVPVERTAGRCQGKGLVAAFRDVEDRDRARAYIGLQIGVPRRDLPELPEGQYYWADLEGLAAYTTGGEPLGRVSHLFATGANDVLVLQGDRERLVPFVYGQTVRRVDLTAGRIELDWDPDF</sequence>
<evidence type="ECO:0000255" key="1">
    <source>
        <dbReference type="HAMAP-Rule" id="MF_00014"/>
    </source>
</evidence>
<reference key="1">
    <citation type="submission" date="2006-08" db="EMBL/GenBank/DDBJ databases">
        <title>Complete sequence of Alkalilimnicola ehrilichei MLHE-1.</title>
        <authorList>
            <person name="Copeland A."/>
            <person name="Lucas S."/>
            <person name="Lapidus A."/>
            <person name="Barry K."/>
            <person name="Detter J.C."/>
            <person name="Glavina del Rio T."/>
            <person name="Hammon N."/>
            <person name="Israni S."/>
            <person name="Dalin E."/>
            <person name="Tice H."/>
            <person name="Pitluck S."/>
            <person name="Sims D."/>
            <person name="Brettin T."/>
            <person name="Bruce D."/>
            <person name="Han C."/>
            <person name="Tapia R."/>
            <person name="Gilna P."/>
            <person name="Schmutz J."/>
            <person name="Larimer F."/>
            <person name="Land M."/>
            <person name="Hauser L."/>
            <person name="Kyrpides N."/>
            <person name="Mikhailova N."/>
            <person name="Oremland R.S."/>
            <person name="Hoeft S.E."/>
            <person name="Switzer-Blum J."/>
            <person name="Kulp T."/>
            <person name="King G."/>
            <person name="Tabita R."/>
            <person name="Witte B."/>
            <person name="Santini J.M."/>
            <person name="Basu P."/>
            <person name="Hollibaugh J.T."/>
            <person name="Xie G."/>
            <person name="Stolz J.F."/>
            <person name="Richardson P."/>
        </authorList>
    </citation>
    <scope>NUCLEOTIDE SEQUENCE [LARGE SCALE GENOMIC DNA]</scope>
    <source>
        <strain>ATCC BAA-1101 / DSM 17681 / MLHE-1</strain>
    </source>
</reference>
<organism>
    <name type="scientific">Alkalilimnicola ehrlichii (strain ATCC BAA-1101 / DSM 17681 / MLHE-1)</name>
    <dbReference type="NCBI Taxonomy" id="187272"/>
    <lineage>
        <taxon>Bacteria</taxon>
        <taxon>Pseudomonadati</taxon>
        <taxon>Pseudomonadota</taxon>
        <taxon>Gammaproteobacteria</taxon>
        <taxon>Chromatiales</taxon>
        <taxon>Ectothiorhodospiraceae</taxon>
        <taxon>Alkalilimnicola</taxon>
    </lineage>
</organism>
<protein>
    <recommendedName>
        <fullName evidence="1">Ribosome maturation factor RimM</fullName>
    </recommendedName>
</protein>
<dbReference type="EMBL" id="CP000453">
    <property type="protein sequence ID" value="ABI56239.1"/>
    <property type="molecule type" value="Genomic_DNA"/>
</dbReference>
<dbReference type="RefSeq" id="WP_011628634.1">
    <property type="nucleotide sequence ID" value="NC_008340.1"/>
</dbReference>
<dbReference type="SMR" id="Q0AA98"/>
<dbReference type="KEGG" id="aeh:Mlg_0885"/>
<dbReference type="eggNOG" id="COG0806">
    <property type="taxonomic scope" value="Bacteria"/>
</dbReference>
<dbReference type="HOGENOM" id="CLU_077636_1_0_6"/>
<dbReference type="OrthoDB" id="9783509at2"/>
<dbReference type="Proteomes" id="UP000001962">
    <property type="component" value="Chromosome"/>
</dbReference>
<dbReference type="GO" id="GO:0005737">
    <property type="term" value="C:cytoplasm"/>
    <property type="evidence" value="ECO:0007669"/>
    <property type="project" value="UniProtKB-SubCell"/>
</dbReference>
<dbReference type="GO" id="GO:0005840">
    <property type="term" value="C:ribosome"/>
    <property type="evidence" value="ECO:0007669"/>
    <property type="project" value="InterPro"/>
</dbReference>
<dbReference type="GO" id="GO:0043022">
    <property type="term" value="F:ribosome binding"/>
    <property type="evidence" value="ECO:0007669"/>
    <property type="project" value="InterPro"/>
</dbReference>
<dbReference type="GO" id="GO:0042274">
    <property type="term" value="P:ribosomal small subunit biogenesis"/>
    <property type="evidence" value="ECO:0007669"/>
    <property type="project" value="UniProtKB-UniRule"/>
</dbReference>
<dbReference type="GO" id="GO:0006364">
    <property type="term" value="P:rRNA processing"/>
    <property type="evidence" value="ECO:0007669"/>
    <property type="project" value="UniProtKB-UniRule"/>
</dbReference>
<dbReference type="Gene3D" id="2.30.30.240">
    <property type="entry name" value="PRC-barrel domain"/>
    <property type="match status" value="1"/>
</dbReference>
<dbReference type="Gene3D" id="2.40.30.60">
    <property type="entry name" value="RimM"/>
    <property type="match status" value="1"/>
</dbReference>
<dbReference type="HAMAP" id="MF_00014">
    <property type="entry name" value="Ribosome_mat_RimM"/>
    <property type="match status" value="1"/>
</dbReference>
<dbReference type="InterPro" id="IPR011033">
    <property type="entry name" value="PRC_barrel-like_sf"/>
</dbReference>
<dbReference type="InterPro" id="IPR056792">
    <property type="entry name" value="PRC_RimM"/>
</dbReference>
<dbReference type="InterPro" id="IPR011961">
    <property type="entry name" value="RimM"/>
</dbReference>
<dbReference type="InterPro" id="IPR002676">
    <property type="entry name" value="RimM_N"/>
</dbReference>
<dbReference type="InterPro" id="IPR036976">
    <property type="entry name" value="RimM_N_sf"/>
</dbReference>
<dbReference type="InterPro" id="IPR009000">
    <property type="entry name" value="Transl_B-barrel_sf"/>
</dbReference>
<dbReference type="NCBIfam" id="TIGR02273">
    <property type="entry name" value="16S_RimM"/>
    <property type="match status" value="1"/>
</dbReference>
<dbReference type="PANTHER" id="PTHR33692">
    <property type="entry name" value="RIBOSOME MATURATION FACTOR RIMM"/>
    <property type="match status" value="1"/>
</dbReference>
<dbReference type="PANTHER" id="PTHR33692:SF1">
    <property type="entry name" value="RIBOSOME MATURATION FACTOR RIMM"/>
    <property type="match status" value="1"/>
</dbReference>
<dbReference type="Pfam" id="PF24986">
    <property type="entry name" value="PRC_RimM"/>
    <property type="match status" value="1"/>
</dbReference>
<dbReference type="Pfam" id="PF01782">
    <property type="entry name" value="RimM"/>
    <property type="match status" value="1"/>
</dbReference>
<dbReference type="SUPFAM" id="SSF50346">
    <property type="entry name" value="PRC-barrel domain"/>
    <property type="match status" value="1"/>
</dbReference>
<dbReference type="SUPFAM" id="SSF50447">
    <property type="entry name" value="Translation proteins"/>
    <property type="match status" value="1"/>
</dbReference>
<feature type="chain" id="PRO_0000321712" description="Ribosome maturation factor RimM">
    <location>
        <begin position="1"/>
        <end position="170"/>
    </location>
</feature>
<feature type="domain" description="PRC barrel" evidence="1">
    <location>
        <begin position="98"/>
        <end position="170"/>
    </location>
</feature>
<comment type="function">
    <text evidence="1">An accessory protein needed during the final step in the assembly of 30S ribosomal subunit, possibly for assembly of the head region. Essential for efficient processing of 16S rRNA. May be needed both before and after RbfA during the maturation of 16S rRNA. It has affinity for free ribosomal 30S subunits but not for 70S ribosomes.</text>
</comment>
<comment type="subunit">
    <text evidence="1">Binds ribosomal protein uS19.</text>
</comment>
<comment type="subcellular location">
    <subcellularLocation>
        <location evidence="1">Cytoplasm</location>
    </subcellularLocation>
</comment>
<comment type="domain">
    <text evidence="1">The PRC barrel domain binds ribosomal protein uS19.</text>
</comment>
<comment type="similarity">
    <text evidence="1">Belongs to the RimM family.</text>
</comment>
<gene>
    <name evidence="1" type="primary">rimM</name>
    <name type="ordered locus">Mlg_0885</name>
</gene>
<keyword id="KW-0143">Chaperone</keyword>
<keyword id="KW-0963">Cytoplasm</keyword>
<keyword id="KW-1185">Reference proteome</keyword>
<keyword id="KW-0690">Ribosome biogenesis</keyword>
<keyword id="KW-0698">rRNA processing</keyword>
<proteinExistence type="inferred from homology"/>